<feature type="initiator methionine" description="Removed; by host" evidence="1">
    <location>
        <position position="1"/>
    </location>
</feature>
<feature type="chain" id="PRO_0000385489" description="Cytoplasmic envelopment protein 3" evidence="1">
    <location>
        <begin position="2"/>
        <end position="96"/>
    </location>
</feature>
<feature type="region of interest" description="Asp/Glu-rich (acidic)" evidence="1">
    <location>
        <begin position="37"/>
        <end position="43"/>
    </location>
</feature>
<feature type="region of interest" description="Disordered" evidence="2">
    <location>
        <begin position="57"/>
        <end position="96"/>
    </location>
</feature>
<feature type="short sequence motif" description="Di-leucine-like internalization motif" evidence="1">
    <location>
        <begin position="18"/>
        <end position="19"/>
    </location>
</feature>
<feature type="compositionally biased region" description="Pro residues" evidence="2">
    <location>
        <begin position="87"/>
        <end position="96"/>
    </location>
</feature>
<feature type="modified residue" description="Phosphoserine" evidence="1">
    <location>
        <position position="40"/>
    </location>
</feature>
<feature type="lipid moiety-binding region" description="N-myristoyl glycine; by host" evidence="1">
    <location>
        <position position="2"/>
    </location>
</feature>
<sequence>MGLSFSGARPCCCRNNVLITDDGEVVSLTAHDFDVVDIESEEEGNFYVPPDMRVVTRAPGRQRLRSSDPPSRHTHRRTPGGACPATQFPPPMSDSE</sequence>
<organism>
    <name type="scientific">Human herpesvirus 1 (strain KOS)</name>
    <name type="common">HHV-1</name>
    <name type="synonym">Human herpes simplex virus 1</name>
    <dbReference type="NCBI Taxonomy" id="10306"/>
    <lineage>
        <taxon>Viruses</taxon>
        <taxon>Duplodnaviria</taxon>
        <taxon>Heunggongvirae</taxon>
        <taxon>Peploviricota</taxon>
        <taxon>Herviviricetes</taxon>
        <taxon>Herpesvirales</taxon>
        <taxon>Orthoherpesviridae</taxon>
        <taxon>Alphaherpesvirinae</taxon>
        <taxon>Simplexvirus</taxon>
        <taxon>Simplexvirus humanalpha1</taxon>
        <taxon>Human herpesvirus 1</taxon>
    </lineage>
</organism>
<organismHost>
    <name type="scientific">Homo sapiens</name>
    <name type="common">Human</name>
    <dbReference type="NCBI Taxonomy" id="9606"/>
</organismHost>
<accession>Q68980</accession>
<dbReference type="EMBL" id="K02022">
    <property type="protein sequence ID" value="AAA45773.1"/>
    <property type="molecule type" value="Genomic_DNA"/>
</dbReference>
<dbReference type="GO" id="GO:0044178">
    <property type="term" value="C:host cell Golgi membrane"/>
    <property type="evidence" value="ECO:0007669"/>
    <property type="project" value="UniProtKB-SubCell"/>
</dbReference>
<dbReference type="GO" id="GO:0020002">
    <property type="term" value="C:host cell plasma membrane"/>
    <property type="evidence" value="ECO:0007669"/>
    <property type="project" value="UniProtKB-SubCell"/>
</dbReference>
<dbReference type="GO" id="GO:0016020">
    <property type="term" value="C:membrane"/>
    <property type="evidence" value="ECO:0007669"/>
    <property type="project" value="UniProtKB-KW"/>
</dbReference>
<dbReference type="GO" id="GO:0019033">
    <property type="term" value="C:viral tegument"/>
    <property type="evidence" value="ECO:0007669"/>
    <property type="project" value="UniProtKB-SubCell"/>
</dbReference>
<dbReference type="GO" id="GO:0055036">
    <property type="term" value="C:virion membrane"/>
    <property type="evidence" value="ECO:0007669"/>
    <property type="project" value="UniProtKB-SubCell"/>
</dbReference>
<dbReference type="GO" id="GO:0009653">
    <property type="term" value="P:anatomical structure morphogenesis"/>
    <property type="evidence" value="ECO:0007669"/>
    <property type="project" value="UniProtKB-UniRule"/>
</dbReference>
<dbReference type="GO" id="GO:0046760">
    <property type="term" value="P:viral budding from Golgi membrane"/>
    <property type="evidence" value="ECO:0007669"/>
    <property type="project" value="UniProtKB-UniRule"/>
</dbReference>
<dbReference type="HAMAP" id="MF_04040">
    <property type="entry name" value="HSV_CEP3_alphahv"/>
    <property type="match status" value="1"/>
</dbReference>
<dbReference type="InterPro" id="IPR024351">
    <property type="entry name" value="Tegument_UL11_Herpesvir"/>
</dbReference>
<dbReference type="InterPro" id="IPR016395">
    <property type="entry name" value="UL11_simplexvirus"/>
</dbReference>
<dbReference type="Pfam" id="PF11094">
    <property type="entry name" value="UL11"/>
    <property type="match status" value="1"/>
</dbReference>
<dbReference type="PIRSF" id="PIRSF003496">
    <property type="entry name" value="Myristoylat_tegument_UL11"/>
    <property type="match status" value="1"/>
</dbReference>
<gene>
    <name type="ORF">UL11</name>
</gene>
<protein>
    <recommendedName>
        <fullName evidence="1">Cytoplasmic envelopment protein 3</fullName>
    </recommendedName>
</protein>
<reference key="1">
    <citation type="journal article" date="1986" name="J. Virol.">
        <title>Characterization of the genes encoding herpes simplex virus type 1 and type 2 alkaline exonucleases and overlapping proteins.</title>
        <authorList>
            <person name="Draper K.G."/>
            <person name="Devi-Rao G."/>
            <person name="Costa R.H."/>
            <person name="Blair E.D."/>
            <person name="Thompson R.L."/>
            <person name="Wagner E.K."/>
        </authorList>
    </citation>
    <scope>NUCLEOTIDE SEQUENCE [GENOMIC DNA]</scope>
</reference>
<reference key="2">
    <citation type="journal article" date="2003" name="J. Virol.">
        <title>Binding partners for the UL11 tegument protein of herpes simplex virus type 1.</title>
        <authorList>
            <person name="Loomis J.S."/>
            <person name="Courtney R.J."/>
            <person name="Wills J.W."/>
        </authorList>
    </citation>
    <scope>INTERACTION WITH UL16</scope>
</reference>
<reference key="3">
    <citation type="journal article" date="2008" name="J. Virol.">
        <title>Analysis of the interaction between the UL11 and UL16 tegument proteins of herpes simplex virus.</title>
        <authorList>
            <person name="Yeh P.-C."/>
            <person name="Meckes D.G. Jr."/>
            <person name="Wills J.W."/>
        </authorList>
    </citation>
    <scope>INTERACTION WITH UL16</scope>
</reference>
<evidence type="ECO:0000255" key="1">
    <source>
        <dbReference type="HAMAP-Rule" id="MF_04040"/>
    </source>
</evidence>
<evidence type="ECO:0000256" key="2">
    <source>
        <dbReference type="SAM" id="MobiDB-lite"/>
    </source>
</evidence>
<evidence type="ECO:0000269" key="3">
    <source>
    </source>
</evidence>
<evidence type="ECO:0000269" key="4">
    <source>
    </source>
</evidence>
<comment type="function">
    <text evidence="1">Plays an important role in the cytoplasmic envelopment of tegument proteins and capsids during the assembly and egress processes. Also participates in viral entry at the fusion step probably by regulating the core fusion machinery.</text>
</comment>
<comment type="subunit">
    <text evidence="1 3 4">Interacts with cytoplasmic envelopment protein 2; this interaction is essential for the proper localization of each protein to the assembly complex and thus for the production of infectious virus (By similarity). Interacts with gE (via C-terminus). Interacts with gD (via C-terminus). Interacts with UL56.</text>
</comment>
<comment type="subcellular location">
    <subcellularLocation>
        <location evidence="1">Virion tegument</location>
    </subcellularLocation>
    <subcellularLocation>
        <location evidence="1">Virion membrane</location>
        <topology evidence="1">Lipid-anchor</topology>
    </subcellularLocation>
    <subcellularLocation>
        <location evidence="1">Host cell membrane</location>
        <topology evidence="1">Lipid-anchor</topology>
        <orientation evidence="1">Cytoplasmic side</orientation>
    </subcellularLocation>
    <subcellularLocation>
        <location evidence="1">Host Golgi apparatus membrane</location>
        <topology evidence="1">Lipid-anchor</topology>
        <orientation evidence="1">Cytoplasmic side</orientation>
    </subcellularLocation>
    <text evidence="1">Virion membrane-associated tegument protein. Associates with host membrane lipids rafts. During virion morphogenesis, this protein probably accumulates in the endosomes and trans-Golgi where secondary envelopment occurs. It is probably transported to the cell surface from where it is endocytosed and directed to the trans-Golgi network (TGN).</text>
</comment>
<comment type="PTM">
    <text evidence="1">Myristoylation and palmitoylation (probably on one or more of the nearby cysteines at the N-terminus) enable membrane-binding and Golgi apparatus-specific targeting and are essential for efficient packaging.</text>
</comment>
<comment type="PTM">
    <text evidence="1">Phosphorylated. Phosphorylation does not seem to be required for recycling to the host Golgi apparatus. Packaging is selective for underphosphorylated forms.</text>
</comment>
<comment type="similarity">
    <text evidence="1">Belongs to the herpesviridae cytoplasmic envelopment protein 3 family.</text>
</comment>
<proteinExistence type="evidence at protein level"/>
<name>CEP3_HHV1K</name>
<keyword id="KW-1032">Host cell membrane</keyword>
<keyword id="KW-1040">Host Golgi apparatus</keyword>
<keyword id="KW-1043">Host membrane</keyword>
<keyword id="KW-0449">Lipoprotein</keyword>
<keyword id="KW-0472">Membrane</keyword>
<keyword id="KW-0519">Myristate</keyword>
<keyword id="KW-0564">Palmitate</keyword>
<keyword id="KW-0597">Phosphoprotein</keyword>
<keyword id="KW-0946">Virion</keyword>
<keyword id="KW-0920">Virion tegument</keyword>